<accession>A2T338</accession>
<proteinExistence type="inferred from homology"/>
<sequence length="120" mass="13803">MFLLPKYDSFWLFLLIASLIPVSAFSISKILAPVSQGPEKLTSYESGIEPMGDAWIQFQIRYYMFALVFVIFDVETVFLYPWAMSFKELGISAFIEALIFVLILIIGLIYAWRKGALEWS</sequence>
<name>NU3C_ANGEV</name>
<gene>
    <name evidence="1" type="primary">ndhC</name>
</gene>
<keyword id="KW-0150">Chloroplast</keyword>
<keyword id="KW-0472">Membrane</keyword>
<keyword id="KW-0520">NAD</keyword>
<keyword id="KW-0521">NADP</keyword>
<keyword id="KW-0934">Plastid</keyword>
<keyword id="KW-0618">Plastoquinone</keyword>
<keyword id="KW-0874">Quinone</keyword>
<keyword id="KW-0793">Thylakoid</keyword>
<keyword id="KW-1278">Translocase</keyword>
<keyword id="KW-0812">Transmembrane</keyword>
<keyword id="KW-1133">Transmembrane helix</keyword>
<keyword id="KW-0813">Transport</keyword>
<organism>
    <name type="scientific">Angiopteris evecta</name>
    <name type="common">Mule's foot fern</name>
    <name type="synonym">Polypodium evectum</name>
    <dbReference type="NCBI Taxonomy" id="13825"/>
    <lineage>
        <taxon>Eukaryota</taxon>
        <taxon>Viridiplantae</taxon>
        <taxon>Streptophyta</taxon>
        <taxon>Embryophyta</taxon>
        <taxon>Tracheophyta</taxon>
        <taxon>Polypodiopsida</taxon>
        <taxon>Marattiidae</taxon>
        <taxon>Marattiales</taxon>
        <taxon>Marattiaceae</taxon>
        <taxon>Angiopteris</taxon>
    </lineage>
</organism>
<geneLocation type="chloroplast"/>
<evidence type="ECO:0000255" key="1">
    <source>
        <dbReference type="HAMAP-Rule" id="MF_01394"/>
    </source>
</evidence>
<protein>
    <recommendedName>
        <fullName evidence="1">NAD(P)H-quinone oxidoreductase subunit 3, chloroplastic</fullName>
        <ecNumber evidence="1">7.1.1.-</ecNumber>
    </recommendedName>
    <alternativeName>
        <fullName evidence="1">NAD(P)H dehydrogenase subunit 3</fullName>
    </alternativeName>
    <alternativeName>
        <fullName evidence="1">NADH-plastoquinone oxidoreductase subunit 3</fullName>
    </alternativeName>
</protein>
<comment type="function">
    <text evidence="1">NDH shuttles electrons from NAD(P)H:plastoquinone, via FMN and iron-sulfur (Fe-S) centers, to quinones in the photosynthetic chain and possibly in a chloroplast respiratory chain. The immediate electron acceptor for the enzyme in this species is believed to be plastoquinone. Couples the redox reaction to proton translocation, and thus conserves the redox energy in a proton gradient.</text>
</comment>
<comment type="catalytic activity">
    <reaction evidence="1">
        <text>a plastoquinone + NADH + (n+1) H(+)(in) = a plastoquinol + NAD(+) + n H(+)(out)</text>
        <dbReference type="Rhea" id="RHEA:42608"/>
        <dbReference type="Rhea" id="RHEA-COMP:9561"/>
        <dbReference type="Rhea" id="RHEA-COMP:9562"/>
        <dbReference type="ChEBI" id="CHEBI:15378"/>
        <dbReference type="ChEBI" id="CHEBI:17757"/>
        <dbReference type="ChEBI" id="CHEBI:57540"/>
        <dbReference type="ChEBI" id="CHEBI:57945"/>
        <dbReference type="ChEBI" id="CHEBI:62192"/>
    </reaction>
</comment>
<comment type="catalytic activity">
    <reaction evidence="1">
        <text>a plastoquinone + NADPH + (n+1) H(+)(in) = a plastoquinol + NADP(+) + n H(+)(out)</text>
        <dbReference type="Rhea" id="RHEA:42612"/>
        <dbReference type="Rhea" id="RHEA-COMP:9561"/>
        <dbReference type="Rhea" id="RHEA-COMP:9562"/>
        <dbReference type="ChEBI" id="CHEBI:15378"/>
        <dbReference type="ChEBI" id="CHEBI:17757"/>
        <dbReference type="ChEBI" id="CHEBI:57783"/>
        <dbReference type="ChEBI" id="CHEBI:58349"/>
        <dbReference type="ChEBI" id="CHEBI:62192"/>
    </reaction>
</comment>
<comment type="subunit">
    <text evidence="1">NDH is composed of at least 16 different subunits, 5 of which are encoded in the nucleus.</text>
</comment>
<comment type="subcellular location">
    <subcellularLocation>
        <location evidence="1">Plastid</location>
        <location evidence="1">Chloroplast thylakoid membrane</location>
        <topology evidence="1">Multi-pass membrane protein</topology>
    </subcellularLocation>
</comment>
<comment type="similarity">
    <text evidence="1">Belongs to the complex I subunit 3 family.</text>
</comment>
<feature type="chain" id="PRO_0000362807" description="NAD(P)H-quinone oxidoreductase subunit 3, chloroplastic">
    <location>
        <begin position="1"/>
        <end position="120"/>
    </location>
</feature>
<feature type="transmembrane region" description="Helical" evidence="1">
    <location>
        <begin position="10"/>
        <end position="30"/>
    </location>
</feature>
<feature type="transmembrane region" description="Helical" evidence="1">
    <location>
        <begin position="64"/>
        <end position="84"/>
    </location>
</feature>
<feature type="transmembrane region" description="Helical" evidence="1">
    <location>
        <begin position="89"/>
        <end position="109"/>
    </location>
</feature>
<dbReference type="EC" id="7.1.1.-" evidence="1"/>
<dbReference type="EMBL" id="DQ821119">
    <property type="protein sequence ID" value="ABG79605.1"/>
    <property type="molecule type" value="Genomic_DNA"/>
</dbReference>
<dbReference type="RefSeq" id="YP_001023706.1">
    <property type="nucleotide sequence ID" value="NC_008829.1"/>
</dbReference>
<dbReference type="SMR" id="A2T338"/>
<dbReference type="GeneID" id="4788134"/>
<dbReference type="GO" id="GO:0009535">
    <property type="term" value="C:chloroplast thylakoid membrane"/>
    <property type="evidence" value="ECO:0007669"/>
    <property type="project" value="UniProtKB-SubCell"/>
</dbReference>
<dbReference type="GO" id="GO:0030964">
    <property type="term" value="C:NADH dehydrogenase complex"/>
    <property type="evidence" value="ECO:0007669"/>
    <property type="project" value="TreeGrafter"/>
</dbReference>
<dbReference type="GO" id="GO:0008137">
    <property type="term" value="F:NADH dehydrogenase (ubiquinone) activity"/>
    <property type="evidence" value="ECO:0007669"/>
    <property type="project" value="InterPro"/>
</dbReference>
<dbReference type="GO" id="GO:0048038">
    <property type="term" value="F:quinone binding"/>
    <property type="evidence" value="ECO:0007669"/>
    <property type="project" value="UniProtKB-KW"/>
</dbReference>
<dbReference type="GO" id="GO:0019684">
    <property type="term" value="P:photosynthesis, light reaction"/>
    <property type="evidence" value="ECO:0007669"/>
    <property type="project" value="UniProtKB-UniRule"/>
</dbReference>
<dbReference type="FunFam" id="1.20.58.1610:FF:000001">
    <property type="entry name" value="NAD(P)H-quinone oxidoreductase subunit 3, chloroplastic"/>
    <property type="match status" value="1"/>
</dbReference>
<dbReference type="Gene3D" id="1.20.58.1610">
    <property type="entry name" value="NADH:ubiquinone/plastoquinone oxidoreductase, chain 3"/>
    <property type="match status" value="1"/>
</dbReference>
<dbReference type="HAMAP" id="MF_01394">
    <property type="entry name" value="NDH1_NuoA"/>
    <property type="match status" value="1"/>
</dbReference>
<dbReference type="InterPro" id="IPR023043">
    <property type="entry name" value="NAD(P)H_OxRDtase_bac/plastid"/>
</dbReference>
<dbReference type="InterPro" id="IPR000440">
    <property type="entry name" value="NADH_UbQ/plastoQ_OxRdtase_su3"/>
</dbReference>
<dbReference type="InterPro" id="IPR038430">
    <property type="entry name" value="NDAH_ubi_oxred_su3_sf"/>
</dbReference>
<dbReference type="PANTHER" id="PTHR11058">
    <property type="entry name" value="NADH-UBIQUINONE OXIDOREDUCTASE CHAIN 3"/>
    <property type="match status" value="1"/>
</dbReference>
<dbReference type="PANTHER" id="PTHR11058:SF9">
    <property type="entry name" value="NADH-UBIQUINONE OXIDOREDUCTASE CHAIN 3"/>
    <property type="match status" value="1"/>
</dbReference>
<dbReference type="Pfam" id="PF00507">
    <property type="entry name" value="Oxidored_q4"/>
    <property type="match status" value="1"/>
</dbReference>
<reference key="1">
    <citation type="journal article" date="2007" name="Am. Fern J.">
        <title>The complete plastid genome sequence of Angiopteris evecta (G. Forst.) Hoffm. (Marattiaceae).</title>
        <authorList>
            <person name="Roper J.M."/>
            <person name="Hansen S.K."/>
            <person name="Wolf P.G."/>
            <person name="Karol K.G."/>
            <person name="Mandoli D.F."/>
            <person name="Everett K.D.E."/>
            <person name="Kuehl J."/>
            <person name="Boore J.L."/>
        </authorList>
    </citation>
    <scope>NUCLEOTIDE SEQUENCE [LARGE SCALE GENOMIC DNA]</scope>
</reference>